<gene>
    <name evidence="1" type="primary">SLX4</name>
    <name type="ORF">HCBG_00471</name>
</gene>
<dbReference type="EMBL" id="GG663363">
    <property type="protein sequence ID" value="EEH11016.1"/>
    <property type="status" value="ALT_INIT"/>
    <property type="molecule type" value="Genomic_DNA"/>
</dbReference>
<dbReference type="SMR" id="C0NBH5"/>
<dbReference type="STRING" id="447093.C0NBH5"/>
<dbReference type="VEuPathDB" id="FungiDB:I7I50_02303"/>
<dbReference type="HOGENOM" id="CLU_016773_0_0_1"/>
<dbReference type="InParanoid" id="C0NBH5"/>
<dbReference type="Proteomes" id="UP000001631">
    <property type="component" value="Unassembled WGS sequence"/>
</dbReference>
<dbReference type="GO" id="GO:0033557">
    <property type="term" value="C:Slx1-Slx4 complex"/>
    <property type="evidence" value="ECO:0007669"/>
    <property type="project" value="UniProtKB-UniRule"/>
</dbReference>
<dbReference type="GO" id="GO:0017108">
    <property type="term" value="F:5'-flap endonuclease activity"/>
    <property type="evidence" value="ECO:0007669"/>
    <property type="project" value="InterPro"/>
</dbReference>
<dbReference type="GO" id="GO:0006310">
    <property type="term" value="P:DNA recombination"/>
    <property type="evidence" value="ECO:0007669"/>
    <property type="project" value="UniProtKB-UniRule"/>
</dbReference>
<dbReference type="GO" id="GO:0006281">
    <property type="term" value="P:DNA repair"/>
    <property type="evidence" value="ECO:0007669"/>
    <property type="project" value="UniProtKB-UniRule"/>
</dbReference>
<dbReference type="GO" id="GO:0006260">
    <property type="term" value="P:DNA replication"/>
    <property type="evidence" value="ECO:0007669"/>
    <property type="project" value="InterPro"/>
</dbReference>
<dbReference type="CDD" id="cd22999">
    <property type="entry name" value="SAP_SLX4"/>
    <property type="match status" value="1"/>
</dbReference>
<dbReference type="HAMAP" id="MF_03110">
    <property type="entry name" value="Endonuc_su_Slx4"/>
    <property type="match status" value="1"/>
</dbReference>
<dbReference type="InterPro" id="IPR027784">
    <property type="entry name" value="Slx4_ascomycetes"/>
</dbReference>
<dbReference type="InterPro" id="IPR018574">
    <property type="entry name" value="Structure-sp_endonuc_su_Slx4"/>
</dbReference>
<dbReference type="Pfam" id="PF09494">
    <property type="entry name" value="Slx4"/>
    <property type="match status" value="1"/>
</dbReference>
<feature type="chain" id="PRO_0000388007" description="Structure-specific endonuclease subunit SLX4">
    <location>
        <begin position="1"/>
        <end position="843"/>
    </location>
</feature>
<feature type="region of interest" description="Disordered" evidence="2">
    <location>
        <begin position="26"/>
        <end position="111"/>
    </location>
</feature>
<feature type="region of interest" description="Disordered" evidence="2">
    <location>
        <begin position="281"/>
        <end position="313"/>
    </location>
</feature>
<feature type="region of interest" description="Disordered" evidence="2">
    <location>
        <begin position="339"/>
        <end position="377"/>
    </location>
</feature>
<feature type="region of interest" description="Disordered" evidence="2">
    <location>
        <begin position="603"/>
        <end position="655"/>
    </location>
</feature>
<feature type="region of interest" description="Disordered" evidence="2">
    <location>
        <begin position="729"/>
        <end position="748"/>
    </location>
</feature>
<feature type="compositionally biased region" description="Polar residues" evidence="2">
    <location>
        <begin position="50"/>
        <end position="69"/>
    </location>
</feature>
<feature type="compositionally biased region" description="Polar residues" evidence="2">
    <location>
        <begin position="285"/>
        <end position="301"/>
    </location>
</feature>
<feature type="compositionally biased region" description="Basic residues" evidence="2">
    <location>
        <begin position="302"/>
        <end position="311"/>
    </location>
</feature>
<feature type="compositionally biased region" description="Polar residues" evidence="2">
    <location>
        <begin position="349"/>
        <end position="372"/>
    </location>
</feature>
<feature type="compositionally biased region" description="Polar residues" evidence="2">
    <location>
        <begin position="603"/>
        <end position="616"/>
    </location>
</feature>
<feature type="compositionally biased region" description="Basic and acidic residues" evidence="2">
    <location>
        <begin position="617"/>
        <end position="636"/>
    </location>
</feature>
<feature type="compositionally biased region" description="Low complexity" evidence="2">
    <location>
        <begin position="739"/>
        <end position="748"/>
    </location>
</feature>
<comment type="function">
    <text evidence="1">Regulatory subunit of the SLX1-SLX4 structure-specific endonuclease that resolves DNA secondary structures generated during DNA repair and recombination. Has endonuclease activity towards branched DNA substrates, introducing single-strand cuts in duplex DNA close to junctions with ss-DNA.</text>
</comment>
<comment type="subunit">
    <text evidence="1">Forms a heterodimer with SLX1.</text>
</comment>
<comment type="subcellular location">
    <subcellularLocation>
        <location evidence="1">Nucleus</location>
    </subcellularLocation>
</comment>
<comment type="PTM">
    <text evidence="1">Phosphorylated in response to DNA damage.</text>
</comment>
<comment type="similarity">
    <text evidence="1">Belongs to the SLX4 family.</text>
</comment>
<comment type="sequence caution" evidence="3">
    <conflict type="erroneous initiation">
        <sequence resource="EMBL-CDS" id="EEH11016"/>
    </conflict>
</comment>
<organism>
    <name type="scientific">Ajellomyces capsulatus (strain G186AR / H82 / ATCC MYA-2454 / RMSCC 2432)</name>
    <name type="common">Darling's disease fungus</name>
    <name type="synonym">Histoplasma capsulatum</name>
    <dbReference type="NCBI Taxonomy" id="447093"/>
    <lineage>
        <taxon>Eukaryota</taxon>
        <taxon>Fungi</taxon>
        <taxon>Dikarya</taxon>
        <taxon>Ascomycota</taxon>
        <taxon>Pezizomycotina</taxon>
        <taxon>Eurotiomycetes</taxon>
        <taxon>Eurotiomycetidae</taxon>
        <taxon>Onygenales</taxon>
        <taxon>Ajellomycetaceae</taxon>
        <taxon>Histoplasma</taxon>
    </lineage>
</organism>
<accession>C0NBH5</accession>
<keyword id="KW-0227">DNA damage</keyword>
<keyword id="KW-0233">DNA recombination</keyword>
<keyword id="KW-0234">DNA repair</keyword>
<keyword id="KW-0539">Nucleus</keyword>
<keyword id="KW-0597">Phosphoprotein</keyword>
<keyword id="KW-1185">Reference proteome</keyword>
<sequence length="843" mass="92634">MDNSAITSQSNPTPLVCSVTPIIVGSPPSPANVIELSSPSTPPTPLTLLASFSKTPSRKTTSPDSNGENTICHGVRQVRRVPRNNPGREKKSITGPSKEHKQRTRSPKTTTRREIKIVEGDRLIVGHDKREKKGATTKRMKKRDGVADKKLYARVSKVKSSENLDLDAKIPSSKVCNNTLPLVGDDMDNESSELQLEQAIKRRHDWTPAREVTTPVVDVAELHSSPCGKAVTRMHGVGTLLSDYGFSGVVETSLGTKSESFRNAPTTKRPMELQKFSTVPAIPTPTESSTTEDIQGSSSKQQRVKAKKPQKGKLTTITSHATAKYCVADQTVDLDYIQNVAPKSPGRKNISNRPSGMKHSNSGRGKSSTLKNDNGPPVFRVVPPLEAFKSFEGQELLFGTSSQLERGHPEYRCDETQDIQNSPSNSAAVSELAVPYRISSEGKNLGSSLFRLSGSKNLWSASARDLTGAVFEVDEIDFQEPSMGLSVLATKSRCHPGNRGPPRRNLVDVDNVPDKKLDIDTTEGENGNHSSVADNIVDRENLNPKISANTSETNLECAPRNKPAFSRFTTSELAKKVAAYGFKPIKSRDNMISLLERCWETQSKTFMPESKPNQGTDDARKNGFRKENHSDVRVRPDSATLANRRSPKKRQAKALSKFQEPNNFLPIENSTTTASMLPIEHVISSHTILINDDQLSDSVGETVSFLPTLDHNGNGTTLQENMLEIKSPATPNARHSRQRSSSTSFSIEPPSLASQITKAIKSQPRIRAFNGLKQPTWYEKILMYDPIQLEDLAAWLNTDGFGRIGEDREVGPGVVREWCESKGVCCVWKKQVSGRSHCLPMVS</sequence>
<proteinExistence type="inferred from homology"/>
<reference key="1">
    <citation type="submission" date="2009-02" db="EMBL/GenBank/DDBJ databases">
        <title>The genome sequence of Ajellomyces capsulatus strain G186AR.</title>
        <authorList>
            <person name="Champion M."/>
            <person name="Cuomo C.A."/>
            <person name="Ma L.-J."/>
            <person name="Henn M.R."/>
            <person name="Sil A."/>
            <person name="Goldman B."/>
            <person name="Young S.K."/>
            <person name="Kodira C.D."/>
            <person name="Zeng Q."/>
            <person name="Koehrsen M."/>
            <person name="Alvarado L."/>
            <person name="Berlin A."/>
            <person name="Borenstein D."/>
            <person name="Chen Z."/>
            <person name="Engels R."/>
            <person name="Freedman E."/>
            <person name="Gellesch M."/>
            <person name="Goldberg J."/>
            <person name="Griggs A."/>
            <person name="Gujja S."/>
            <person name="Heiman D."/>
            <person name="Hepburn T."/>
            <person name="Howarth C."/>
            <person name="Jen D."/>
            <person name="Larson L."/>
            <person name="Lewis B."/>
            <person name="Mehta T."/>
            <person name="Park D."/>
            <person name="Pearson M."/>
            <person name="Roberts A."/>
            <person name="Saif S."/>
            <person name="Shea T."/>
            <person name="Shenoy N."/>
            <person name="Sisk P."/>
            <person name="Stolte C."/>
            <person name="Sykes S."/>
            <person name="Walk T."/>
            <person name="White J."/>
            <person name="Yandava C."/>
            <person name="Klein B."/>
            <person name="McEwen J.G."/>
            <person name="Puccia R."/>
            <person name="Goldman G.H."/>
            <person name="Felipe M.S."/>
            <person name="Nino-Vega G."/>
            <person name="San-Blas G."/>
            <person name="Taylor J."/>
            <person name="Mendoza L."/>
            <person name="Galagan J.E."/>
            <person name="Nusbaum C."/>
            <person name="Birren B.W."/>
        </authorList>
    </citation>
    <scope>NUCLEOTIDE SEQUENCE [LARGE SCALE GENOMIC DNA]</scope>
    <source>
        <strain>G186AR / H82 / ATCC MYA-2454 / RMSCC 2432</strain>
    </source>
</reference>
<name>SLX4_AJECG</name>
<protein>
    <recommendedName>
        <fullName evidence="1">Structure-specific endonuclease subunit SLX4</fullName>
    </recommendedName>
</protein>
<evidence type="ECO:0000255" key="1">
    <source>
        <dbReference type="HAMAP-Rule" id="MF_03110"/>
    </source>
</evidence>
<evidence type="ECO:0000256" key="2">
    <source>
        <dbReference type="SAM" id="MobiDB-lite"/>
    </source>
</evidence>
<evidence type="ECO:0000305" key="3"/>